<organism>
    <name type="scientific">Drosophila melanogaster</name>
    <name type="common">Fruit fly</name>
    <dbReference type="NCBI Taxonomy" id="7227"/>
    <lineage>
        <taxon>Eukaryota</taxon>
        <taxon>Metazoa</taxon>
        <taxon>Ecdysozoa</taxon>
        <taxon>Arthropoda</taxon>
        <taxon>Hexapoda</taxon>
        <taxon>Insecta</taxon>
        <taxon>Pterygota</taxon>
        <taxon>Neoptera</taxon>
        <taxon>Endopterygota</taxon>
        <taxon>Diptera</taxon>
        <taxon>Brachycera</taxon>
        <taxon>Muscomorpha</taxon>
        <taxon>Ephydroidea</taxon>
        <taxon>Drosophilidae</taxon>
        <taxon>Drosophila</taxon>
        <taxon>Sophophora</taxon>
    </lineage>
</organism>
<reference key="1">
    <citation type="journal article" date="1995" name="Mol. Cell. Biol.">
        <title>The genomic organization of the region containing the Drosophila melanogaster rpL7a (Surf-3) gene differs from those of the mammalian and avian Surfeit loci.</title>
        <authorList>
            <person name="Armes N."/>
            <person name="Fried M."/>
        </authorList>
    </citation>
    <scope>NUCLEOTIDE SEQUENCE [GENOMIC DNA]</scope>
    <source>
        <strain>Canton-S</strain>
    </source>
</reference>
<reference key="2">
    <citation type="journal article" date="2000" name="Science">
        <title>The genome sequence of Drosophila melanogaster.</title>
        <authorList>
            <person name="Adams M.D."/>
            <person name="Celniker S.E."/>
            <person name="Holt R.A."/>
            <person name="Evans C.A."/>
            <person name="Gocayne J.D."/>
            <person name="Amanatides P.G."/>
            <person name="Scherer S.E."/>
            <person name="Li P.W."/>
            <person name="Hoskins R.A."/>
            <person name="Galle R.F."/>
            <person name="George R.A."/>
            <person name="Lewis S.E."/>
            <person name="Richards S."/>
            <person name="Ashburner M."/>
            <person name="Henderson S.N."/>
            <person name="Sutton G.G."/>
            <person name="Wortman J.R."/>
            <person name="Yandell M.D."/>
            <person name="Zhang Q."/>
            <person name="Chen L.X."/>
            <person name="Brandon R.C."/>
            <person name="Rogers Y.-H.C."/>
            <person name="Blazej R.G."/>
            <person name="Champe M."/>
            <person name="Pfeiffer B.D."/>
            <person name="Wan K.H."/>
            <person name="Doyle C."/>
            <person name="Baxter E.G."/>
            <person name="Helt G."/>
            <person name="Nelson C.R."/>
            <person name="Miklos G.L.G."/>
            <person name="Abril J.F."/>
            <person name="Agbayani A."/>
            <person name="An H.-J."/>
            <person name="Andrews-Pfannkoch C."/>
            <person name="Baldwin D."/>
            <person name="Ballew R.M."/>
            <person name="Basu A."/>
            <person name="Baxendale J."/>
            <person name="Bayraktaroglu L."/>
            <person name="Beasley E.M."/>
            <person name="Beeson K.Y."/>
            <person name="Benos P.V."/>
            <person name="Berman B.P."/>
            <person name="Bhandari D."/>
            <person name="Bolshakov S."/>
            <person name="Borkova D."/>
            <person name="Botchan M.R."/>
            <person name="Bouck J."/>
            <person name="Brokstein P."/>
            <person name="Brottier P."/>
            <person name="Burtis K.C."/>
            <person name="Busam D.A."/>
            <person name="Butler H."/>
            <person name="Cadieu E."/>
            <person name="Center A."/>
            <person name="Chandra I."/>
            <person name="Cherry J.M."/>
            <person name="Cawley S."/>
            <person name="Dahlke C."/>
            <person name="Davenport L.B."/>
            <person name="Davies P."/>
            <person name="de Pablos B."/>
            <person name="Delcher A."/>
            <person name="Deng Z."/>
            <person name="Mays A.D."/>
            <person name="Dew I."/>
            <person name="Dietz S.M."/>
            <person name="Dodson K."/>
            <person name="Doup L.E."/>
            <person name="Downes M."/>
            <person name="Dugan-Rocha S."/>
            <person name="Dunkov B.C."/>
            <person name="Dunn P."/>
            <person name="Durbin K.J."/>
            <person name="Evangelista C.C."/>
            <person name="Ferraz C."/>
            <person name="Ferriera S."/>
            <person name="Fleischmann W."/>
            <person name="Fosler C."/>
            <person name="Gabrielian A.E."/>
            <person name="Garg N.S."/>
            <person name="Gelbart W.M."/>
            <person name="Glasser K."/>
            <person name="Glodek A."/>
            <person name="Gong F."/>
            <person name="Gorrell J.H."/>
            <person name="Gu Z."/>
            <person name="Guan P."/>
            <person name="Harris M."/>
            <person name="Harris N.L."/>
            <person name="Harvey D.A."/>
            <person name="Heiman T.J."/>
            <person name="Hernandez J.R."/>
            <person name="Houck J."/>
            <person name="Hostin D."/>
            <person name="Houston K.A."/>
            <person name="Howland T.J."/>
            <person name="Wei M.-H."/>
            <person name="Ibegwam C."/>
            <person name="Jalali M."/>
            <person name="Kalush F."/>
            <person name="Karpen G.H."/>
            <person name="Ke Z."/>
            <person name="Kennison J.A."/>
            <person name="Ketchum K.A."/>
            <person name="Kimmel B.E."/>
            <person name="Kodira C.D."/>
            <person name="Kraft C.L."/>
            <person name="Kravitz S."/>
            <person name="Kulp D."/>
            <person name="Lai Z."/>
            <person name="Lasko P."/>
            <person name="Lei Y."/>
            <person name="Levitsky A.A."/>
            <person name="Li J.H."/>
            <person name="Li Z."/>
            <person name="Liang Y."/>
            <person name="Lin X."/>
            <person name="Liu X."/>
            <person name="Mattei B."/>
            <person name="McIntosh T.C."/>
            <person name="McLeod M.P."/>
            <person name="McPherson D."/>
            <person name="Merkulov G."/>
            <person name="Milshina N.V."/>
            <person name="Mobarry C."/>
            <person name="Morris J."/>
            <person name="Moshrefi A."/>
            <person name="Mount S.M."/>
            <person name="Moy M."/>
            <person name="Murphy B."/>
            <person name="Murphy L."/>
            <person name="Muzny D.M."/>
            <person name="Nelson D.L."/>
            <person name="Nelson D.R."/>
            <person name="Nelson K.A."/>
            <person name="Nixon K."/>
            <person name="Nusskern D.R."/>
            <person name="Pacleb J.M."/>
            <person name="Palazzolo M."/>
            <person name="Pittman G.S."/>
            <person name="Pan S."/>
            <person name="Pollard J."/>
            <person name="Puri V."/>
            <person name="Reese M.G."/>
            <person name="Reinert K."/>
            <person name="Remington K."/>
            <person name="Saunders R.D.C."/>
            <person name="Scheeler F."/>
            <person name="Shen H."/>
            <person name="Shue B.C."/>
            <person name="Siden-Kiamos I."/>
            <person name="Simpson M."/>
            <person name="Skupski M.P."/>
            <person name="Smith T.J."/>
            <person name="Spier E."/>
            <person name="Spradling A.C."/>
            <person name="Stapleton M."/>
            <person name="Strong R."/>
            <person name="Sun E."/>
            <person name="Svirskas R."/>
            <person name="Tector C."/>
            <person name="Turner R."/>
            <person name="Venter E."/>
            <person name="Wang A.H."/>
            <person name="Wang X."/>
            <person name="Wang Z.-Y."/>
            <person name="Wassarman D.A."/>
            <person name="Weinstock G.M."/>
            <person name="Weissenbach J."/>
            <person name="Williams S.M."/>
            <person name="Woodage T."/>
            <person name="Worley K.C."/>
            <person name="Wu D."/>
            <person name="Yang S."/>
            <person name="Yao Q.A."/>
            <person name="Ye J."/>
            <person name="Yeh R.-F."/>
            <person name="Zaveri J.S."/>
            <person name="Zhan M."/>
            <person name="Zhang G."/>
            <person name="Zhao Q."/>
            <person name="Zheng L."/>
            <person name="Zheng X.H."/>
            <person name="Zhong F.N."/>
            <person name="Zhong W."/>
            <person name="Zhou X."/>
            <person name="Zhu S.C."/>
            <person name="Zhu X."/>
            <person name="Smith H.O."/>
            <person name="Gibbs R.A."/>
            <person name="Myers E.W."/>
            <person name="Rubin G.M."/>
            <person name="Venter J.C."/>
        </authorList>
    </citation>
    <scope>NUCLEOTIDE SEQUENCE [LARGE SCALE GENOMIC DNA]</scope>
    <source>
        <strain>Berkeley</strain>
    </source>
</reference>
<reference key="3">
    <citation type="journal article" date="2002" name="Genome Biol.">
        <title>Annotation of the Drosophila melanogaster euchromatic genome: a systematic review.</title>
        <authorList>
            <person name="Misra S."/>
            <person name="Crosby M.A."/>
            <person name="Mungall C.J."/>
            <person name="Matthews B.B."/>
            <person name="Campbell K.S."/>
            <person name="Hradecky P."/>
            <person name="Huang Y."/>
            <person name="Kaminker J.S."/>
            <person name="Millburn G.H."/>
            <person name="Prochnik S.E."/>
            <person name="Smith C.D."/>
            <person name="Tupy J.L."/>
            <person name="Whitfield E.J."/>
            <person name="Bayraktaroglu L."/>
            <person name="Berman B.P."/>
            <person name="Bettencourt B.R."/>
            <person name="Celniker S.E."/>
            <person name="de Grey A.D.N.J."/>
            <person name="Drysdale R.A."/>
            <person name="Harris N.L."/>
            <person name="Richter J."/>
            <person name="Russo S."/>
            <person name="Schroeder A.J."/>
            <person name="Shu S.Q."/>
            <person name="Stapleton M."/>
            <person name="Yamada C."/>
            <person name="Ashburner M."/>
            <person name="Gelbart W.M."/>
            <person name="Rubin G.M."/>
            <person name="Lewis S.E."/>
        </authorList>
    </citation>
    <scope>GENOME REANNOTATION</scope>
    <source>
        <strain>Berkeley</strain>
    </source>
</reference>
<reference key="4">
    <citation type="journal article" date="2002" name="Genome Biol.">
        <title>A Drosophila full-length cDNA resource.</title>
        <authorList>
            <person name="Stapleton M."/>
            <person name="Carlson J.W."/>
            <person name="Brokstein P."/>
            <person name="Yu C."/>
            <person name="Champe M."/>
            <person name="George R.A."/>
            <person name="Guarin H."/>
            <person name="Kronmiller B."/>
            <person name="Pacleb J.M."/>
            <person name="Park S."/>
            <person name="Wan K.H."/>
            <person name="Rubin G.M."/>
            <person name="Celniker S.E."/>
        </authorList>
    </citation>
    <scope>NUCLEOTIDE SEQUENCE [LARGE SCALE MRNA]</scope>
    <source>
        <strain>Berkeley</strain>
        <tissue>Embryo</tissue>
    </source>
</reference>
<reference key="5">
    <citation type="journal article" date="2013" name="Nature">
        <title>Structures of the human and Drosophila 80S ribosome.</title>
        <authorList>
            <person name="Anger A.M."/>
            <person name="Armache J.P."/>
            <person name="Berninghausen O."/>
            <person name="Habeck M."/>
            <person name="Subklewe M."/>
            <person name="Wilson D.N."/>
            <person name="Beckmann R."/>
        </authorList>
    </citation>
    <scope>STRUCTURE BY ELECTRON MICROSCOPY (6.0 ANGSTROMS) OF THE 80S RIBOSOME</scope>
</reference>
<protein>
    <recommendedName>
        <fullName evidence="1">Large ribosomal subunit protein eL8</fullName>
    </recommendedName>
    <alternativeName>
        <fullName>60S ribosomal protein L7a</fullName>
    </alternativeName>
</protein>
<dbReference type="EMBL" id="X82782">
    <property type="protein sequence ID" value="CAA58023.1"/>
    <property type="molecule type" value="Genomic_DNA"/>
</dbReference>
<dbReference type="EMBL" id="AE014298">
    <property type="protein sequence ID" value="AAF46169.1"/>
    <property type="molecule type" value="Genomic_DNA"/>
</dbReference>
<dbReference type="EMBL" id="AE014298">
    <property type="protein sequence ID" value="AAN09170.1"/>
    <property type="molecule type" value="Genomic_DNA"/>
</dbReference>
<dbReference type="EMBL" id="AE014298">
    <property type="protein sequence ID" value="AAN09172.1"/>
    <property type="molecule type" value="Genomic_DNA"/>
</dbReference>
<dbReference type="EMBL" id="AY089570">
    <property type="protein sequence ID" value="AAL90308.1"/>
    <property type="molecule type" value="mRNA"/>
</dbReference>
<dbReference type="PIR" id="A57416">
    <property type="entry name" value="A57416"/>
</dbReference>
<dbReference type="RefSeq" id="NP_001284944.1">
    <property type="nucleotide sequence ID" value="NM_001298015.1"/>
</dbReference>
<dbReference type="RefSeq" id="NP_001284945.1">
    <property type="nucleotide sequence ID" value="NM_001298016.1"/>
</dbReference>
<dbReference type="RefSeq" id="NP_511063.1">
    <property type="nucleotide sequence ID" value="NM_078508.6"/>
</dbReference>
<dbReference type="RefSeq" id="NP_727094.1">
    <property type="nucleotide sequence ID" value="NM_167073.3"/>
</dbReference>
<dbReference type="RefSeq" id="NP_727096.1">
    <property type="nucleotide sequence ID" value="NM_167075.2"/>
</dbReference>
<dbReference type="PDB" id="4V6W">
    <property type="method" value="EM"/>
    <property type="resolution" value="6.00 A"/>
    <property type="chains" value="CG=1-271"/>
</dbReference>
<dbReference type="PDB" id="6XU6">
    <property type="method" value="EM"/>
    <property type="resolution" value="3.50 A"/>
    <property type="chains" value="CG=31-271"/>
</dbReference>
<dbReference type="PDB" id="6XU7">
    <property type="method" value="EM"/>
    <property type="resolution" value="4.90 A"/>
    <property type="chains" value="CG=31-271"/>
</dbReference>
<dbReference type="PDB" id="6XU8">
    <property type="method" value="EM"/>
    <property type="resolution" value="3.00 A"/>
    <property type="chains" value="CG=31-271"/>
</dbReference>
<dbReference type="PDBsum" id="4V6W"/>
<dbReference type="PDBsum" id="6XU6"/>
<dbReference type="PDBsum" id="6XU7"/>
<dbReference type="PDBsum" id="6XU8"/>
<dbReference type="EMDB" id="EMD-10622"/>
<dbReference type="EMDB" id="EMD-10623"/>
<dbReference type="EMDB" id="EMD-10624"/>
<dbReference type="SMR" id="P46223"/>
<dbReference type="BioGRID" id="58075">
    <property type="interactions" value="127"/>
</dbReference>
<dbReference type="FunCoup" id="P46223">
    <property type="interactions" value="1079"/>
</dbReference>
<dbReference type="IntAct" id="P46223">
    <property type="interactions" value="2"/>
</dbReference>
<dbReference type="MINT" id="P46223"/>
<dbReference type="STRING" id="7227.FBpp0309987"/>
<dbReference type="PaxDb" id="7227-FBpp0070877"/>
<dbReference type="DNASU" id="31588"/>
<dbReference type="EnsemblMetazoa" id="FBtr0070915">
    <property type="protein sequence ID" value="FBpp0070877"/>
    <property type="gene ID" value="FBgn0014026"/>
</dbReference>
<dbReference type="EnsemblMetazoa" id="FBtr0070916">
    <property type="protein sequence ID" value="FBpp0070878"/>
    <property type="gene ID" value="FBgn0014026"/>
</dbReference>
<dbReference type="EnsemblMetazoa" id="FBtr0343328">
    <property type="protein sequence ID" value="FBpp0309986"/>
    <property type="gene ID" value="FBgn0014026"/>
</dbReference>
<dbReference type="EnsemblMetazoa" id="FBtr0343329">
    <property type="protein sequence ID" value="FBpp0309987"/>
    <property type="gene ID" value="FBgn0014026"/>
</dbReference>
<dbReference type="EnsemblMetazoa" id="FBtr0345293">
    <property type="protein sequence ID" value="FBpp0311460"/>
    <property type="gene ID" value="FBgn0014026"/>
</dbReference>
<dbReference type="GeneID" id="31588"/>
<dbReference type="KEGG" id="dme:Dmel_CG3314"/>
<dbReference type="AGR" id="FB:FBgn0014026"/>
<dbReference type="CTD" id="6130"/>
<dbReference type="FlyBase" id="FBgn0014026">
    <property type="gene designation" value="RpL7A"/>
</dbReference>
<dbReference type="VEuPathDB" id="VectorBase:FBgn0014026"/>
<dbReference type="eggNOG" id="KOG3166">
    <property type="taxonomic scope" value="Eukaryota"/>
</dbReference>
<dbReference type="HOGENOM" id="CLU_055193_0_1_1"/>
<dbReference type="InParanoid" id="P46223"/>
<dbReference type="OMA" id="RMVKWPA"/>
<dbReference type="OrthoDB" id="29563at2759"/>
<dbReference type="PhylomeDB" id="P46223"/>
<dbReference type="Reactome" id="R-DME-156827">
    <property type="pathway name" value="L13a-mediated translational silencing of Ceruloplasmin expression"/>
</dbReference>
<dbReference type="Reactome" id="R-DME-1799339">
    <property type="pathway name" value="SRP-dependent cotranslational protein targeting to membrane"/>
</dbReference>
<dbReference type="Reactome" id="R-DME-72689">
    <property type="pathway name" value="Formation of a pool of free 40S subunits"/>
</dbReference>
<dbReference type="Reactome" id="R-DME-72706">
    <property type="pathway name" value="GTP hydrolysis and joining of the 60S ribosomal subunit"/>
</dbReference>
<dbReference type="Reactome" id="R-DME-975956">
    <property type="pathway name" value="Nonsense Mediated Decay (NMD) independent of the Exon Junction Complex (EJC)"/>
</dbReference>
<dbReference type="Reactome" id="R-DME-975957">
    <property type="pathway name" value="Nonsense Mediated Decay (NMD) enhanced by the Exon Junction Complex (EJC)"/>
</dbReference>
<dbReference type="SignaLink" id="P46223"/>
<dbReference type="BioGRID-ORCS" id="31588">
    <property type="hits" value="1 hit in 1 CRISPR screen"/>
</dbReference>
<dbReference type="ChiTaRS" id="RpL7A">
    <property type="organism name" value="fly"/>
</dbReference>
<dbReference type="GenomeRNAi" id="31588"/>
<dbReference type="PRO" id="PR:P46223"/>
<dbReference type="Proteomes" id="UP000000803">
    <property type="component" value="Chromosome X"/>
</dbReference>
<dbReference type="Bgee" id="FBgn0014026">
    <property type="expression patterns" value="Expressed in adult glial cell (Drosophila) in haltere and 279 other cell types or tissues"/>
</dbReference>
<dbReference type="ExpressionAtlas" id="P46223">
    <property type="expression patterns" value="baseline and differential"/>
</dbReference>
<dbReference type="GO" id="GO:0022625">
    <property type="term" value="C:cytosolic large ribosomal subunit"/>
    <property type="evidence" value="ECO:0000318"/>
    <property type="project" value="GO_Central"/>
</dbReference>
<dbReference type="GO" id="GO:0022626">
    <property type="term" value="C:cytosolic ribosome"/>
    <property type="evidence" value="ECO:0000314"/>
    <property type="project" value="FlyBase"/>
</dbReference>
<dbReference type="GO" id="GO:0003723">
    <property type="term" value="F:RNA binding"/>
    <property type="evidence" value="ECO:0000318"/>
    <property type="project" value="GO_Central"/>
</dbReference>
<dbReference type="GO" id="GO:0003735">
    <property type="term" value="F:structural constituent of ribosome"/>
    <property type="evidence" value="ECO:0000314"/>
    <property type="project" value="FlyBase"/>
</dbReference>
<dbReference type="GO" id="GO:0002181">
    <property type="term" value="P:cytoplasmic translation"/>
    <property type="evidence" value="ECO:0000304"/>
    <property type="project" value="FlyBase"/>
</dbReference>
<dbReference type="GO" id="GO:0000470">
    <property type="term" value="P:maturation of LSU-rRNA"/>
    <property type="evidence" value="ECO:0000318"/>
    <property type="project" value="GO_Central"/>
</dbReference>
<dbReference type="FunFam" id="3.30.1330.30:FF:000003">
    <property type="entry name" value="60S ribosomal protein L7a"/>
    <property type="match status" value="1"/>
</dbReference>
<dbReference type="Gene3D" id="3.30.1330.30">
    <property type="match status" value="1"/>
</dbReference>
<dbReference type="InterPro" id="IPR050257">
    <property type="entry name" value="eL8/uL1-like"/>
</dbReference>
<dbReference type="InterPro" id="IPR029064">
    <property type="entry name" value="Ribosomal_eL30-like_sf"/>
</dbReference>
<dbReference type="InterPro" id="IPR004037">
    <property type="entry name" value="Ribosomal_eL8-like_CS"/>
</dbReference>
<dbReference type="InterPro" id="IPR004038">
    <property type="entry name" value="Ribosomal_eL8/eL30/eS12/Gad45"/>
</dbReference>
<dbReference type="InterPro" id="IPR018492">
    <property type="entry name" value="Ribosomal_eL8/Nhp2"/>
</dbReference>
<dbReference type="InterPro" id="IPR001921">
    <property type="entry name" value="Ribosomal_eL8_euk"/>
</dbReference>
<dbReference type="PANTHER" id="PTHR23105">
    <property type="entry name" value="RIBOSOMAL PROTEIN L7AE FAMILY MEMBER"/>
    <property type="match status" value="1"/>
</dbReference>
<dbReference type="Pfam" id="PF01248">
    <property type="entry name" value="Ribosomal_L7Ae"/>
    <property type="match status" value="1"/>
</dbReference>
<dbReference type="PRINTS" id="PR00881">
    <property type="entry name" value="L7ARS6FAMILY"/>
</dbReference>
<dbReference type="PRINTS" id="PR00882">
    <property type="entry name" value="RIBOSOMALL7A"/>
</dbReference>
<dbReference type="SUPFAM" id="SSF55315">
    <property type="entry name" value="L30e-like"/>
    <property type="match status" value="1"/>
</dbReference>
<dbReference type="PROSITE" id="PS01082">
    <property type="entry name" value="RIBOSOMAL_L7AE"/>
    <property type="match status" value="1"/>
</dbReference>
<proteinExistence type="evidence at protein level"/>
<feature type="chain" id="PRO_0000136755" description="Large ribosomal subunit protein eL8">
    <location>
        <begin position="1"/>
        <end position="271"/>
    </location>
</feature>
<feature type="sequence conflict" description="In Ref. 1; CAA58023." evidence="1" ref="1">
    <original>P</original>
    <variation>A</variation>
    <location>
        <position position="112"/>
    </location>
</feature>
<feature type="sequence conflict" description="In Ref. 1; CAA58023." evidence="1" ref="1">
    <original>KL</original>
    <variation>NV</variation>
    <location>
        <begin position="116"/>
        <end position="117"/>
    </location>
</feature>
<name>RL7A_DROME</name>
<evidence type="ECO:0000305" key="1"/>
<gene>
    <name type="primary">RpL7A</name>
    <name type="synonym">SURF-3</name>
    <name type="ORF">CG3314</name>
</gene>
<accession>P46223</accession>
<accession>A4V411</accession>
<accession>Q9W3Z2</accession>
<keyword id="KW-0002">3D-structure</keyword>
<keyword id="KW-1185">Reference proteome</keyword>
<keyword id="KW-0687">Ribonucleoprotein</keyword>
<keyword id="KW-0689">Ribosomal protein</keyword>
<comment type="similarity">
    <text evidence="1">Belongs to the eukaryotic ribosomal protein eL8 family.</text>
</comment>
<sequence length="271" mass="30732">MVVKKPRPKKKPVTKKVAPAPLAVKKPVVKKVVNQLFEKRPKNFGIGQNVQPKRDLSRFVRWPKYIRVQRQKAVLQKRLKVPPPIHQFSQTLDKTTAVKLFKLLEKYRPESPLAKKLRLKKIAEAKAKGKDVEPKKKPSYVSAGTNTVTKLIEQKKAQLVVIAHDVDPLELVLFLPALCRKMGVPYCIVKGKARLGRLVRRKTCTTLALTTVDNNDKANFGKVLEAVKTNFNERHEEIRRHWGGGILGSKSLARISKLERAKARELAQKQG</sequence>